<gene>
    <name evidence="1" type="primary">hisD</name>
    <name type="ordered locus">blr1256</name>
</gene>
<protein>
    <recommendedName>
        <fullName evidence="1">Histidinol dehydrogenase</fullName>
        <shortName evidence="1">HDH</shortName>
        <ecNumber evidence="1">1.1.1.23</ecNumber>
    </recommendedName>
</protein>
<proteinExistence type="inferred from homology"/>
<feature type="chain" id="PRO_0000135739" description="Histidinol dehydrogenase">
    <location>
        <begin position="1"/>
        <end position="431"/>
    </location>
</feature>
<feature type="active site" description="Proton acceptor" evidence="1">
    <location>
        <position position="327"/>
    </location>
</feature>
<feature type="active site" description="Proton acceptor" evidence="1">
    <location>
        <position position="328"/>
    </location>
</feature>
<feature type="binding site" evidence="1">
    <location>
        <position position="130"/>
    </location>
    <ligand>
        <name>NAD(+)</name>
        <dbReference type="ChEBI" id="CHEBI:57540"/>
    </ligand>
</feature>
<feature type="binding site" evidence="1">
    <location>
        <position position="191"/>
    </location>
    <ligand>
        <name>NAD(+)</name>
        <dbReference type="ChEBI" id="CHEBI:57540"/>
    </ligand>
</feature>
<feature type="binding site" evidence="1">
    <location>
        <position position="214"/>
    </location>
    <ligand>
        <name>NAD(+)</name>
        <dbReference type="ChEBI" id="CHEBI:57540"/>
    </ligand>
</feature>
<feature type="binding site" evidence="1">
    <location>
        <position position="237"/>
    </location>
    <ligand>
        <name>substrate</name>
    </ligand>
</feature>
<feature type="binding site" evidence="1">
    <location>
        <position position="259"/>
    </location>
    <ligand>
        <name>substrate</name>
    </ligand>
</feature>
<feature type="binding site" evidence="1">
    <location>
        <position position="259"/>
    </location>
    <ligand>
        <name>Zn(2+)</name>
        <dbReference type="ChEBI" id="CHEBI:29105"/>
    </ligand>
</feature>
<feature type="binding site" evidence="1">
    <location>
        <position position="262"/>
    </location>
    <ligand>
        <name>substrate</name>
    </ligand>
</feature>
<feature type="binding site" evidence="1">
    <location>
        <position position="262"/>
    </location>
    <ligand>
        <name>Zn(2+)</name>
        <dbReference type="ChEBI" id="CHEBI:29105"/>
    </ligand>
</feature>
<feature type="binding site" evidence="1">
    <location>
        <position position="328"/>
    </location>
    <ligand>
        <name>substrate</name>
    </ligand>
</feature>
<feature type="binding site" evidence="1">
    <location>
        <position position="361"/>
    </location>
    <ligand>
        <name>substrate</name>
    </ligand>
</feature>
<feature type="binding site" evidence="1">
    <location>
        <position position="361"/>
    </location>
    <ligand>
        <name>Zn(2+)</name>
        <dbReference type="ChEBI" id="CHEBI:29105"/>
    </ligand>
</feature>
<feature type="binding site" evidence="1">
    <location>
        <position position="415"/>
    </location>
    <ligand>
        <name>substrate</name>
    </ligand>
</feature>
<feature type="binding site" evidence="1">
    <location>
        <position position="420"/>
    </location>
    <ligand>
        <name>substrate</name>
    </ligand>
</feature>
<feature type="binding site" evidence="1">
    <location>
        <position position="420"/>
    </location>
    <ligand>
        <name>Zn(2+)</name>
        <dbReference type="ChEBI" id="CHEBI:29105"/>
    </ligand>
</feature>
<sequence length="431" mass="44907">MPVRLDRSSADFDQRFAAFLAAKREVSADVEAAARAIVDDVARRGDAALLEATAKFDRLTLDASGLRVSAAEIEAAVKACDAATLDALSLARDRIETYHRRQLPKDERFTDPLGVELGWRYTAIESAGLYVPGGTAAYPSSVLMNAVPAKVAGVSRLVMVVPSPDGKLNPLVLAAARLGGVTEIYRVGGAQAVAALAHGTATIAPVAKIVGPGNAYVAAAKRLVFGKVGIDMIAGPSEVLVIADDTGNADWIAADLLAQAEHDTSAQSILITDSARLAADVEKAVEAQLKTLPRTAIASASWADFGAIIMVKNLNDAIPLADAIAAEHLEIMTTDPDALAARIRNAGAVFLGAHTPEAIGDYVGGSNHVLPTARSARFSSGLSVHDFMKRTSILKCGPDQLRALGPAAMTLGKAEGLDAHSRSIGLRLNLS</sequence>
<comment type="function">
    <text evidence="1">Catalyzes the sequential NAD-dependent oxidations of L-histidinol to L-histidinaldehyde and then to L-histidine.</text>
</comment>
<comment type="catalytic activity">
    <reaction evidence="1">
        <text>L-histidinol + 2 NAD(+) + H2O = L-histidine + 2 NADH + 3 H(+)</text>
        <dbReference type="Rhea" id="RHEA:20641"/>
        <dbReference type="ChEBI" id="CHEBI:15377"/>
        <dbReference type="ChEBI" id="CHEBI:15378"/>
        <dbReference type="ChEBI" id="CHEBI:57540"/>
        <dbReference type="ChEBI" id="CHEBI:57595"/>
        <dbReference type="ChEBI" id="CHEBI:57699"/>
        <dbReference type="ChEBI" id="CHEBI:57945"/>
        <dbReference type="EC" id="1.1.1.23"/>
    </reaction>
</comment>
<comment type="cofactor">
    <cofactor evidence="1">
        <name>Zn(2+)</name>
        <dbReference type="ChEBI" id="CHEBI:29105"/>
    </cofactor>
    <text evidence="1">Binds 1 zinc ion per subunit.</text>
</comment>
<comment type="pathway">
    <text evidence="1">Amino-acid biosynthesis; L-histidine biosynthesis; L-histidine from 5-phospho-alpha-D-ribose 1-diphosphate: step 9/9.</text>
</comment>
<comment type="similarity">
    <text evidence="1">Belongs to the histidinol dehydrogenase family.</text>
</comment>
<evidence type="ECO:0000255" key="1">
    <source>
        <dbReference type="HAMAP-Rule" id="MF_01024"/>
    </source>
</evidence>
<organism>
    <name type="scientific">Bradyrhizobium diazoefficiens (strain JCM 10833 / BCRC 13528 / IAM 13628 / NBRC 14792 / USDA 110)</name>
    <dbReference type="NCBI Taxonomy" id="224911"/>
    <lineage>
        <taxon>Bacteria</taxon>
        <taxon>Pseudomonadati</taxon>
        <taxon>Pseudomonadota</taxon>
        <taxon>Alphaproteobacteria</taxon>
        <taxon>Hyphomicrobiales</taxon>
        <taxon>Nitrobacteraceae</taxon>
        <taxon>Bradyrhizobium</taxon>
    </lineage>
</organism>
<reference key="1">
    <citation type="journal article" date="2002" name="DNA Res.">
        <title>Complete genomic sequence of nitrogen-fixing symbiotic bacterium Bradyrhizobium japonicum USDA110.</title>
        <authorList>
            <person name="Kaneko T."/>
            <person name="Nakamura Y."/>
            <person name="Sato S."/>
            <person name="Minamisawa K."/>
            <person name="Uchiumi T."/>
            <person name="Sasamoto S."/>
            <person name="Watanabe A."/>
            <person name="Idesawa K."/>
            <person name="Iriguchi M."/>
            <person name="Kawashima K."/>
            <person name="Kohara M."/>
            <person name="Matsumoto M."/>
            <person name="Shimpo S."/>
            <person name="Tsuruoka H."/>
            <person name="Wada T."/>
            <person name="Yamada M."/>
            <person name="Tabata S."/>
        </authorList>
    </citation>
    <scope>NUCLEOTIDE SEQUENCE [LARGE SCALE GENOMIC DNA]</scope>
    <source>
        <strain>JCM 10833 / BCRC 13528 / IAM 13628 / NBRC 14792 / USDA 110</strain>
    </source>
</reference>
<name>HISX_BRADU</name>
<keyword id="KW-0028">Amino-acid biosynthesis</keyword>
<keyword id="KW-0368">Histidine biosynthesis</keyword>
<keyword id="KW-0479">Metal-binding</keyword>
<keyword id="KW-0520">NAD</keyword>
<keyword id="KW-0560">Oxidoreductase</keyword>
<keyword id="KW-1185">Reference proteome</keyword>
<keyword id="KW-0862">Zinc</keyword>
<accession>P59397</accession>
<dbReference type="EC" id="1.1.1.23" evidence="1"/>
<dbReference type="EMBL" id="BA000040">
    <property type="protein sequence ID" value="BAC46521.1"/>
    <property type="molecule type" value="Genomic_DNA"/>
</dbReference>
<dbReference type="RefSeq" id="NP_767896.1">
    <property type="nucleotide sequence ID" value="NC_004463.1"/>
</dbReference>
<dbReference type="RefSeq" id="WP_011084074.1">
    <property type="nucleotide sequence ID" value="NC_004463.1"/>
</dbReference>
<dbReference type="SMR" id="P59397"/>
<dbReference type="FunCoup" id="P59397">
    <property type="interactions" value="700"/>
</dbReference>
<dbReference type="STRING" id="224911.AAV28_03175"/>
<dbReference type="EnsemblBacteria" id="BAC46521">
    <property type="protein sequence ID" value="BAC46521"/>
    <property type="gene ID" value="BAC46521"/>
</dbReference>
<dbReference type="GeneID" id="46488529"/>
<dbReference type="KEGG" id="bja:blr1256"/>
<dbReference type="PATRIC" id="fig|224911.44.peg.665"/>
<dbReference type="eggNOG" id="COG0141">
    <property type="taxonomic scope" value="Bacteria"/>
</dbReference>
<dbReference type="HOGENOM" id="CLU_006732_3_3_5"/>
<dbReference type="InParanoid" id="P59397"/>
<dbReference type="OrthoDB" id="9805269at2"/>
<dbReference type="PhylomeDB" id="P59397"/>
<dbReference type="UniPathway" id="UPA00031">
    <property type="reaction ID" value="UER00014"/>
</dbReference>
<dbReference type="Proteomes" id="UP000002526">
    <property type="component" value="Chromosome"/>
</dbReference>
<dbReference type="GO" id="GO:0005737">
    <property type="term" value="C:cytoplasm"/>
    <property type="evidence" value="ECO:0000318"/>
    <property type="project" value="GO_Central"/>
</dbReference>
<dbReference type="GO" id="GO:0005829">
    <property type="term" value="C:cytosol"/>
    <property type="evidence" value="ECO:0000318"/>
    <property type="project" value="GO_Central"/>
</dbReference>
<dbReference type="GO" id="GO:0004399">
    <property type="term" value="F:histidinol dehydrogenase activity"/>
    <property type="evidence" value="ECO:0000318"/>
    <property type="project" value="GO_Central"/>
</dbReference>
<dbReference type="GO" id="GO:0051287">
    <property type="term" value="F:NAD binding"/>
    <property type="evidence" value="ECO:0007669"/>
    <property type="project" value="InterPro"/>
</dbReference>
<dbReference type="GO" id="GO:0008270">
    <property type="term" value="F:zinc ion binding"/>
    <property type="evidence" value="ECO:0007669"/>
    <property type="project" value="UniProtKB-UniRule"/>
</dbReference>
<dbReference type="GO" id="GO:0000105">
    <property type="term" value="P:L-histidine biosynthetic process"/>
    <property type="evidence" value="ECO:0000318"/>
    <property type="project" value="GO_Central"/>
</dbReference>
<dbReference type="CDD" id="cd06572">
    <property type="entry name" value="Histidinol_dh"/>
    <property type="match status" value="1"/>
</dbReference>
<dbReference type="FunFam" id="3.40.50.1980:FF:000001">
    <property type="entry name" value="Histidinol dehydrogenase"/>
    <property type="match status" value="1"/>
</dbReference>
<dbReference type="FunFam" id="3.40.50.1980:FF:000026">
    <property type="entry name" value="Histidinol dehydrogenase"/>
    <property type="match status" value="1"/>
</dbReference>
<dbReference type="FunFam" id="1.20.5.1300:FF:000002">
    <property type="entry name" value="Histidinol dehydrogenase, chloroplastic"/>
    <property type="match status" value="1"/>
</dbReference>
<dbReference type="Gene3D" id="1.20.5.1300">
    <property type="match status" value="1"/>
</dbReference>
<dbReference type="Gene3D" id="3.40.50.1980">
    <property type="entry name" value="Nitrogenase molybdenum iron protein domain"/>
    <property type="match status" value="2"/>
</dbReference>
<dbReference type="HAMAP" id="MF_01024">
    <property type="entry name" value="HisD"/>
    <property type="match status" value="1"/>
</dbReference>
<dbReference type="InterPro" id="IPR016161">
    <property type="entry name" value="Ald_DH/histidinol_DH"/>
</dbReference>
<dbReference type="InterPro" id="IPR001692">
    <property type="entry name" value="Histidinol_DH_CS"/>
</dbReference>
<dbReference type="InterPro" id="IPR022695">
    <property type="entry name" value="Histidinol_DH_monofunct"/>
</dbReference>
<dbReference type="InterPro" id="IPR012131">
    <property type="entry name" value="Hstdl_DH"/>
</dbReference>
<dbReference type="NCBIfam" id="TIGR00069">
    <property type="entry name" value="hisD"/>
    <property type="match status" value="1"/>
</dbReference>
<dbReference type="PANTHER" id="PTHR21256:SF2">
    <property type="entry name" value="HISTIDINE BIOSYNTHESIS TRIFUNCTIONAL PROTEIN"/>
    <property type="match status" value="1"/>
</dbReference>
<dbReference type="PANTHER" id="PTHR21256">
    <property type="entry name" value="HISTIDINOL DEHYDROGENASE HDH"/>
    <property type="match status" value="1"/>
</dbReference>
<dbReference type="Pfam" id="PF00815">
    <property type="entry name" value="Histidinol_dh"/>
    <property type="match status" value="1"/>
</dbReference>
<dbReference type="PIRSF" id="PIRSF000099">
    <property type="entry name" value="Histidinol_dh"/>
    <property type="match status" value="1"/>
</dbReference>
<dbReference type="PRINTS" id="PR00083">
    <property type="entry name" value="HOLDHDRGNASE"/>
</dbReference>
<dbReference type="SUPFAM" id="SSF53720">
    <property type="entry name" value="ALDH-like"/>
    <property type="match status" value="1"/>
</dbReference>
<dbReference type="PROSITE" id="PS00611">
    <property type="entry name" value="HISOL_DEHYDROGENASE"/>
    <property type="match status" value="1"/>
</dbReference>